<comment type="function">
    <text evidence="1">Subunit a, of the mitochondrial membrane ATP synthase complex (F(1)F(0) ATP synthase or Complex V) that produces ATP from ADP in the presence of a proton gradient across the membrane which is generated by electron transport complexes of the respiratory chain. ATP synthase complex consist of a soluble F(1) head domain - the catalytic core - and a membrane F(1) domain - the membrane proton channel. These two domains are linked by a central stalk rotating inside the F(1) region and a stationary peripheral stalk. During catalysis, ATP synthesis in the catalytic domain of F(1) is coupled via a rotary mechanism of the central stalk subunits to proton translocation. With the subunit c (ATP5MC1), forms the proton-conducting channel in the F(0) domain, that contains two crucial half-channels (inlet and outlet) that facilitate proton movement from the mitochondrial intermembrane space (IMS) into the matrix. Protons are taken up via the inlet half-channel and released through the outlet half-channel, following a Grotthuss mechanism.</text>
</comment>
<comment type="catalytic activity">
    <reaction evidence="1">
        <text>H(+)(in) = H(+)(out)</text>
        <dbReference type="Rhea" id="RHEA:34979"/>
        <dbReference type="ChEBI" id="CHEBI:15378"/>
    </reaction>
</comment>
<comment type="subunit">
    <text evidence="1">Component of the ATP synthase complex composed at least of ATP5F1A/subunit alpha, ATP5F1B/subunit beta, ATP5MC1/subunit c (homooctomer), MT-ATP6/subunit a, MT-ATP8/subunit 8, ATP5ME/subunit e, ATP5MF/subunit f, ATP5MG/subunit g, ATP5MK/subunit k, ATP5MJ/subunit j, ATP5F1C/subunit gamma, ATP5F1D/subunit delta, ATP5F1E/subunit epsilon, ATP5PF/subunit F6, ATP5PB/subunit b, ATP5PD/subunit d, ATP5PO/subunit OSCP. ATP synthase complex consists of a soluble F(1) head domain (subunits alpha(3) and beta(3)) - the catalytic core - and a membrane F(0) domain - the membrane proton channel (subunits c, a, 8, e, f, g, k and j). These two domains are linked by a central stalk (subunits gamma, delta, and epsilon) rotating inside the F1 region and a stationary peripheral stalk (subunits F6, b, d, and OSCP). Interacts with DNAJC30; interaction is direct.</text>
</comment>
<comment type="subcellular location">
    <subcellularLocation>
        <location>Mitochondrion inner membrane</location>
        <topology>Multi-pass membrane protein</topology>
    </subcellularLocation>
</comment>
<comment type="similarity">
    <text evidence="3">Belongs to the ATPase A chain family.</text>
</comment>
<accession>Q36967</accession>
<accession>Q35938</accession>
<proteinExistence type="inferred from homology"/>
<evidence type="ECO:0000250" key="1">
    <source>
        <dbReference type="UniProtKB" id="P00846"/>
    </source>
</evidence>
<evidence type="ECO:0000255" key="2"/>
<evidence type="ECO:0000305" key="3"/>
<sequence>RNQPTAALGHLLPEGTPVPLIPVLIIIETISLFIRPLALGVRLTANLTAGHLLIQLIATAAFVLLPMMPTVAILTSIVLFLLTLLEIAVAMIQAYVFVLLLSLYL</sequence>
<name>ATP6_SALTR</name>
<gene>
    <name evidence="1" type="primary">mt-atp6</name>
    <name type="synonym">atp6</name>
    <name type="synonym">atpase6</name>
    <name type="synonym">mtatp6</name>
</gene>
<dbReference type="EMBL" id="X74240">
    <property type="protein sequence ID" value="CAA52302.1"/>
    <property type="molecule type" value="Genomic_DNA"/>
</dbReference>
<dbReference type="EMBL" id="X74241">
    <property type="protein sequence ID" value="CAA52303.1"/>
    <property type="molecule type" value="Genomic_DNA"/>
</dbReference>
<dbReference type="EMBL" id="X74242">
    <property type="protein sequence ID" value="CAA52304.1"/>
    <property type="molecule type" value="Genomic_DNA"/>
</dbReference>
<dbReference type="EMBL" id="X74243">
    <property type="protein sequence ID" value="CAA52305.1"/>
    <property type="molecule type" value="Genomic_DNA"/>
</dbReference>
<dbReference type="EMBL" id="X74244">
    <property type="protein sequence ID" value="CAA52306.1"/>
    <property type="molecule type" value="Genomic_DNA"/>
</dbReference>
<dbReference type="EMBL" id="X74245">
    <property type="protein sequence ID" value="CAA52307.1"/>
    <property type="molecule type" value="Genomic_DNA"/>
</dbReference>
<dbReference type="PIR" id="S36396">
    <property type="entry name" value="S36396"/>
</dbReference>
<dbReference type="SMR" id="Q36967"/>
<dbReference type="Proteomes" id="UP000472277">
    <property type="component" value="Unplaced"/>
</dbReference>
<dbReference type="GO" id="GO:0005743">
    <property type="term" value="C:mitochondrial inner membrane"/>
    <property type="evidence" value="ECO:0007669"/>
    <property type="project" value="UniProtKB-SubCell"/>
</dbReference>
<dbReference type="GO" id="GO:0045259">
    <property type="term" value="C:proton-transporting ATP synthase complex"/>
    <property type="evidence" value="ECO:0000250"/>
    <property type="project" value="UniProtKB"/>
</dbReference>
<dbReference type="GO" id="GO:0015252">
    <property type="term" value="F:proton channel activity"/>
    <property type="evidence" value="ECO:0000250"/>
    <property type="project" value="UniProtKB"/>
</dbReference>
<dbReference type="GO" id="GO:0046933">
    <property type="term" value="F:proton-transporting ATP synthase activity, rotational mechanism"/>
    <property type="evidence" value="ECO:0007669"/>
    <property type="project" value="TreeGrafter"/>
</dbReference>
<dbReference type="GO" id="GO:0015986">
    <property type="term" value="P:proton motive force-driven ATP synthesis"/>
    <property type="evidence" value="ECO:0000250"/>
    <property type="project" value="UniProtKB"/>
</dbReference>
<dbReference type="GO" id="GO:1902600">
    <property type="term" value="P:proton transmembrane transport"/>
    <property type="evidence" value="ECO:0000250"/>
    <property type="project" value="UniProtKB"/>
</dbReference>
<dbReference type="CDD" id="cd00310">
    <property type="entry name" value="ATP-synt_Fo_a_6"/>
    <property type="match status" value="1"/>
</dbReference>
<dbReference type="Gene3D" id="1.20.120.220">
    <property type="entry name" value="ATP synthase, F0 complex, subunit A"/>
    <property type="match status" value="1"/>
</dbReference>
<dbReference type="InterPro" id="IPR000568">
    <property type="entry name" value="ATP_synth_F0_asu"/>
</dbReference>
<dbReference type="InterPro" id="IPR023011">
    <property type="entry name" value="ATP_synth_F0_asu_AS"/>
</dbReference>
<dbReference type="InterPro" id="IPR045083">
    <property type="entry name" value="ATP_synth_F0_asu_bact/mt"/>
</dbReference>
<dbReference type="InterPro" id="IPR035908">
    <property type="entry name" value="F0_ATP_A_sf"/>
</dbReference>
<dbReference type="NCBIfam" id="TIGR01131">
    <property type="entry name" value="ATP_synt_6_or_A"/>
    <property type="match status" value="1"/>
</dbReference>
<dbReference type="PANTHER" id="PTHR11410">
    <property type="entry name" value="ATP SYNTHASE SUBUNIT A"/>
    <property type="match status" value="1"/>
</dbReference>
<dbReference type="PANTHER" id="PTHR11410:SF0">
    <property type="entry name" value="ATP SYNTHASE SUBUNIT A"/>
    <property type="match status" value="1"/>
</dbReference>
<dbReference type="Pfam" id="PF00119">
    <property type="entry name" value="ATP-synt_A"/>
    <property type="match status" value="1"/>
</dbReference>
<dbReference type="PRINTS" id="PR00123">
    <property type="entry name" value="ATPASEA"/>
</dbReference>
<dbReference type="SUPFAM" id="SSF81336">
    <property type="entry name" value="F1F0 ATP synthase subunit A"/>
    <property type="match status" value="1"/>
</dbReference>
<dbReference type="PROSITE" id="PS00449">
    <property type="entry name" value="ATPASE_A"/>
    <property type="match status" value="1"/>
</dbReference>
<geneLocation type="mitochondrion"/>
<feature type="chain" id="PRO_0000082168" description="ATP synthase F(0) complex subunit a">
    <location>
        <begin position="1" status="less than"/>
        <end position="105" status="greater than"/>
    </location>
</feature>
<feature type="transmembrane region" description="Helical" evidence="2">
    <location>
        <begin position="14"/>
        <end position="34"/>
    </location>
</feature>
<feature type="transmembrane region" description="Helical" evidence="2">
    <location>
        <begin position="47"/>
        <end position="67"/>
    </location>
</feature>
<feature type="transmembrane region" description="Helical" evidence="2">
    <location>
        <begin position="72"/>
        <end position="92"/>
    </location>
</feature>
<feature type="sequence variant" description="In haplotypes MA.">
    <original>I</original>
    <variation>V</variation>
    <location>
        <position position="26"/>
    </location>
</feature>
<feature type="non-terminal residue">
    <location>
        <position position="1"/>
    </location>
</feature>
<feature type="non-terminal residue">
    <location>
        <position position="105"/>
    </location>
</feature>
<reference key="1">
    <citation type="journal article" date="1994" name="Mol. Ecol.">
        <title>Mitochondrial control region and protein coding genes sequence variation among phenotypic forms of brown trout Salmo trutta from northern Italy.</title>
        <authorList>
            <person name="Giuffra E."/>
            <person name="Bernatchez L."/>
            <person name="Guyomard R."/>
        </authorList>
    </citation>
    <scope>NUCLEOTIDE SEQUENCE [GENOMIC DNA]</scope>
</reference>
<keyword id="KW-0066">ATP synthesis</keyword>
<keyword id="KW-0138">CF(0)</keyword>
<keyword id="KW-0375">Hydrogen ion transport</keyword>
<keyword id="KW-0406">Ion transport</keyword>
<keyword id="KW-0472">Membrane</keyword>
<keyword id="KW-0496">Mitochondrion</keyword>
<keyword id="KW-0999">Mitochondrion inner membrane</keyword>
<keyword id="KW-1185">Reference proteome</keyword>
<keyword id="KW-0812">Transmembrane</keyword>
<keyword id="KW-1133">Transmembrane helix</keyword>
<keyword id="KW-0813">Transport</keyword>
<protein>
    <recommendedName>
        <fullName evidence="1">ATP synthase F(0) complex subunit a</fullName>
    </recommendedName>
    <alternativeName>
        <fullName>F-ATPase protein 6</fullName>
    </alternativeName>
    <alternativeName>
        <fullName evidence="1">Proton-conducting channel, ATP synthase F(0) complex subunit a</fullName>
    </alternativeName>
</protein>
<organism>
    <name type="scientific">Salmo trutta</name>
    <name type="common">Brown trout</name>
    <dbReference type="NCBI Taxonomy" id="8032"/>
    <lineage>
        <taxon>Eukaryota</taxon>
        <taxon>Metazoa</taxon>
        <taxon>Chordata</taxon>
        <taxon>Craniata</taxon>
        <taxon>Vertebrata</taxon>
        <taxon>Euteleostomi</taxon>
        <taxon>Actinopterygii</taxon>
        <taxon>Neopterygii</taxon>
        <taxon>Teleostei</taxon>
        <taxon>Protacanthopterygii</taxon>
        <taxon>Salmoniformes</taxon>
        <taxon>Salmonidae</taxon>
        <taxon>Salmoninae</taxon>
        <taxon>Salmo</taxon>
    </lineage>
</organism>